<sequence>MTQAGTRSTNGDTENTDILAQARQQVLERGEGLSRDQVLQMLWLPDDRLEELLALAHDVRMRWCGPEVEIEGIISLKTGGCPEDCHFCSQSGLFMSPVRSAWLDIRSLVEAAKQTAKSGATEFCIVAAVRGPDERLMSQVAAGIEAIRNEVEINIACSLGMLTVEQVEQLSGIGVHRYNHNLETARSFFTNVVTTHTWEERWQTLSMVRDAGMEVCCGGILGMGETVEQRAEFALELAELGPDEVPLNFLNPRPGTPFGALEVMPPSEALKSVAAFRLALPRTILRFAGGREITLGDLGAKQGMLGGINAVIVGNYLTTLGRPAEADLRLLDDLQMPIKALNASL</sequence>
<proteinExistence type="inferred from homology"/>
<reference key="1">
    <citation type="journal article" date="2009" name="Nat. Genet.">
        <title>Comparative genomic and phylogeographic analysis of Mycobacterium leprae.</title>
        <authorList>
            <person name="Monot M."/>
            <person name="Honore N."/>
            <person name="Garnier T."/>
            <person name="Zidane N."/>
            <person name="Sherafi D."/>
            <person name="Paniz-Mondolfi A."/>
            <person name="Matsuoka M."/>
            <person name="Taylor G.M."/>
            <person name="Donoghue H.D."/>
            <person name="Bouwman A."/>
            <person name="Mays S."/>
            <person name="Watson C."/>
            <person name="Lockwood D."/>
            <person name="Khamispour A."/>
            <person name="Dowlati Y."/>
            <person name="Jianping S."/>
            <person name="Rea T.H."/>
            <person name="Vera-Cabrera L."/>
            <person name="Stefani M.M."/>
            <person name="Banu S."/>
            <person name="Macdonald M."/>
            <person name="Sapkota B.R."/>
            <person name="Spencer J.S."/>
            <person name="Thomas J."/>
            <person name="Harshman K."/>
            <person name="Singh P."/>
            <person name="Busso P."/>
            <person name="Gattiker A."/>
            <person name="Rougemont J."/>
            <person name="Brennan P.J."/>
            <person name="Cole S.T."/>
        </authorList>
    </citation>
    <scope>NUCLEOTIDE SEQUENCE [LARGE SCALE GENOMIC DNA]</scope>
    <source>
        <strain>Br4923</strain>
    </source>
</reference>
<accession>B8ZR86</accession>
<protein>
    <recommendedName>
        <fullName evidence="1">Biotin synthase</fullName>
        <ecNumber evidence="1">2.8.1.6</ecNumber>
    </recommendedName>
</protein>
<keyword id="KW-0001">2Fe-2S</keyword>
<keyword id="KW-0004">4Fe-4S</keyword>
<keyword id="KW-0093">Biotin biosynthesis</keyword>
<keyword id="KW-0408">Iron</keyword>
<keyword id="KW-0411">Iron-sulfur</keyword>
<keyword id="KW-0479">Metal-binding</keyword>
<keyword id="KW-0949">S-adenosyl-L-methionine</keyword>
<keyword id="KW-0808">Transferase</keyword>
<comment type="function">
    <text evidence="1">Catalyzes the conversion of dethiobiotin (DTB) to biotin by the insertion of a sulfur atom into dethiobiotin via a radical-based mechanism.</text>
</comment>
<comment type="catalytic activity">
    <reaction evidence="1">
        <text>(4R,5S)-dethiobiotin + (sulfur carrier)-SH + 2 reduced [2Fe-2S]-[ferredoxin] + 2 S-adenosyl-L-methionine = (sulfur carrier)-H + biotin + 2 5'-deoxyadenosine + 2 L-methionine + 2 oxidized [2Fe-2S]-[ferredoxin]</text>
        <dbReference type="Rhea" id="RHEA:22060"/>
        <dbReference type="Rhea" id="RHEA-COMP:10000"/>
        <dbReference type="Rhea" id="RHEA-COMP:10001"/>
        <dbReference type="Rhea" id="RHEA-COMP:14737"/>
        <dbReference type="Rhea" id="RHEA-COMP:14739"/>
        <dbReference type="ChEBI" id="CHEBI:17319"/>
        <dbReference type="ChEBI" id="CHEBI:29917"/>
        <dbReference type="ChEBI" id="CHEBI:33737"/>
        <dbReference type="ChEBI" id="CHEBI:33738"/>
        <dbReference type="ChEBI" id="CHEBI:57586"/>
        <dbReference type="ChEBI" id="CHEBI:57844"/>
        <dbReference type="ChEBI" id="CHEBI:59789"/>
        <dbReference type="ChEBI" id="CHEBI:64428"/>
        <dbReference type="ChEBI" id="CHEBI:149473"/>
        <dbReference type="EC" id="2.8.1.6"/>
    </reaction>
</comment>
<comment type="cofactor">
    <cofactor evidence="1">
        <name>[4Fe-4S] cluster</name>
        <dbReference type="ChEBI" id="CHEBI:49883"/>
    </cofactor>
    <text evidence="1">Binds 1 [4Fe-4S] cluster. The cluster is coordinated with 3 cysteines and an exchangeable S-adenosyl-L-methionine.</text>
</comment>
<comment type="cofactor">
    <cofactor evidence="1">
        <name>[2Fe-2S] cluster</name>
        <dbReference type="ChEBI" id="CHEBI:190135"/>
    </cofactor>
    <text evidence="1">Binds 1 [2Fe-2S] cluster. The cluster is coordinated with 3 cysteines and 1 arginine.</text>
</comment>
<comment type="pathway">
    <text evidence="1">Cofactor biosynthesis; biotin biosynthesis; biotin from 7,8-diaminononanoate: step 2/2.</text>
</comment>
<comment type="subunit">
    <text evidence="1">Homodimer.</text>
</comment>
<comment type="similarity">
    <text evidence="1">Belongs to the radical SAM superfamily. Biotin synthase family.</text>
</comment>
<gene>
    <name evidence="1" type="primary">bioB</name>
    <name type="ordered locus">MLBr01220</name>
</gene>
<organism>
    <name type="scientific">Mycobacterium leprae (strain Br4923)</name>
    <dbReference type="NCBI Taxonomy" id="561304"/>
    <lineage>
        <taxon>Bacteria</taxon>
        <taxon>Bacillati</taxon>
        <taxon>Actinomycetota</taxon>
        <taxon>Actinomycetes</taxon>
        <taxon>Mycobacteriales</taxon>
        <taxon>Mycobacteriaceae</taxon>
        <taxon>Mycobacterium</taxon>
    </lineage>
</organism>
<feature type="chain" id="PRO_0000381479" description="Biotin synthase">
    <location>
        <begin position="1"/>
        <end position="345"/>
    </location>
</feature>
<feature type="domain" description="Radical SAM core" evidence="2">
    <location>
        <begin position="66"/>
        <end position="291"/>
    </location>
</feature>
<feature type="binding site" evidence="1">
    <location>
        <position position="81"/>
    </location>
    <ligand>
        <name>[4Fe-4S] cluster</name>
        <dbReference type="ChEBI" id="CHEBI:49883"/>
        <note>4Fe-4S-S-AdoMet</note>
    </ligand>
</feature>
<feature type="binding site" evidence="1">
    <location>
        <position position="85"/>
    </location>
    <ligand>
        <name>[4Fe-4S] cluster</name>
        <dbReference type="ChEBI" id="CHEBI:49883"/>
        <note>4Fe-4S-S-AdoMet</note>
    </ligand>
</feature>
<feature type="binding site" evidence="1">
    <location>
        <position position="88"/>
    </location>
    <ligand>
        <name>[4Fe-4S] cluster</name>
        <dbReference type="ChEBI" id="CHEBI:49883"/>
        <note>4Fe-4S-S-AdoMet</note>
    </ligand>
</feature>
<feature type="binding site" evidence="1">
    <location>
        <position position="124"/>
    </location>
    <ligand>
        <name>[2Fe-2S] cluster</name>
        <dbReference type="ChEBI" id="CHEBI:190135"/>
    </ligand>
</feature>
<feature type="binding site" evidence="1">
    <location>
        <position position="157"/>
    </location>
    <ligand>
        <name>[2Fe-2S] cluster</name>
        <dbReference type="ChEBI" id="CHEBI:190135"/>
    </ligand>
</feature>
<feature type="binding site" evidence="1">
    <location>
        <position position="216"/>
    </location>
    <ligand>
        <name>[2Fe-2S] cluster</name>
        <dbReference type="ChEBI" id="CHEBI:190135"/>
    </ligand>
</feature>
<feature type="binding site" evidence="1">
    <location>
        <position position="286"/>
    </location>
    <ligand>
        <name>[2Fe-2S] cluster</name>
        <dbReference type="ChEBI" id="CHEBI:190135"/>
    </ligand>
</feature>
<name>BIOB_MYCLB</name>
<dbReference type="EC" id="2.8.1.6" evidence="1"/>
<dbReference type="EMBL" id="FM211192">
    <property type="protein sequence ID" value="CAR71315.1"/>
    <property type="molecule type" value="Genomic_DNA"/>
</dbReference>
<dbReference type="SMR" id="B8ZR86"/>
<dbReference type="KEGG" id="mlb:MLBr01220"/>
<dbReference type="HOGENOM" id="CLU_033172_2_1_11"/>
<dbReference type="UniPathway" id="UPA00078">
    <property type="reaction ID" value="UER00162"/>
</dbReference>
<dbReference type="Proteomes" id="UP000006900">
    <property type="component" value="Chromosome"/>
</dbReference>
<dbReference type="GO" id="GO:0051537">
    <property type="term" value="F:2 iron, 2 sulfur cluster binding"/>
    <property type="evidence" value="ECO:0007669"/>
    <property type="project" value="UniProtKB-KW"/>
</dbReference>
<dbReference type="GO" id="GO:0051539">
    <property type="term" value="F:4 iron, 4 sulfur cluster binding"/>
    <property type="evidence" value="ECO:0007669"/>
    <property type="project" value="UniProtKB-KW"/>
</dbReference>
<dbReference type="GO" id="GO:0004076">
    <property type="term" value="F:biotin synthase activity"/>
    <property type="evidence" value="ECO:0007669"/>
    <property type="project" value="UniProtKB-UniRule"/>
</dbReference>
<dbReference type="GO" id="GO:0005506">
    <property type="term" value="F:iron ion binding"/>
    <property type="evidence" value="ECO:0007669"/>
    <property type="project" value="UniProtKB-UniRule"/>
</dbReference>
<dbReference type="GO" id="GO:0009102">
    <property type="term" value="P:biotin biosynthetic process"/>
    <property type="evidence" value="ECO:0007669"/>
    <property type="project" value="UniProtKB-UniRule"/>
</dbReference>
<dbReference type="CDD" id="cd01335">
    <property type="entry name" value="Radical_SAM"/>
    <property type="match status" value="1"/>
</dbReference>
<dbReference type="FunFam" id="3.20.20.70:FF:000026">
    <property type="entry name" value="Biotin synthase"/>
    <property type="match status" value="1"/>
</dbReference>
<dbReference type="Gene3D" id="3.20.20.70">
    <property type="entry name" value="Aldolase class I"/>
    <property type="match status" value="1"/>
</dbReference>
<dbReference type="HAMAP" id="MF_01694">
    <property type="entry name" value="BioB"/>
    <property type="match status" value="1"/>
</dbReference>
<dbReference type="InterPro" id="IPR013785">
    <property type="entry name" value="Aldolase_TIM"/>
</dbReference>
<dbReference type="InterPro" id="IPR010722">
    <property type="entry name" value="BATS_dom"/>
</dbReference>
<dbReference type="InterPro" id="IPR002684">
    <property type="entry name" value="Biotin_synth/BioAB"/>
</dbReference>
<dbReference type="InterPro" id="IPR024177">
    <property type="entry name" value="Biotin_synthase"/>
</dbReference>
<dbReference type="InterPro" id="IPR006638">
    <property type="entry name" value="Elp3/MiaA/NifB-like_rSAM"/>
</dbReference>
<dbReference type="InterPro" id="IPR007197">
    <property type="entry name" value="rSAM"/>
</dbReference>
<dbReference type="NCBIfam" id="TIGR00433">
    <property type="entry name" value="bioB"/>
    <property type="match status" value="1"/>
</dbReference>
<dbReference type="PANTHER" id="PTHR22976">
    <property type="entry name" value="BIOTIN SYNTHASE"/>
    <property type="match status" value="1"/>
</dbReference>
<dbReference type="PANTHER" id="PTHR22976:SF2">
    <property type="entry name" value="BIOTIN SYNTHASE, MITOCHONDRIAL"/>
    <property type="match status" value="1"/>
</dbReference>
<dbReference type="Pfam" id="PF06968">
    <property type="entry name" value="BATS"/>
    <property type="match status" value="1"/>
</dbReference>
<dbReference type="Pfam" id="PF04055">
    <property type="entry name" value="Radical_SAM"/>
    <property type="match status" value="1"/>
</dbReference>
<dbReference type="PIRSF" id="PIRSF001619">
    <property type="entry name" value="Biotin_synth"/>
    <property type="match status" value="1"/>
</dbReference>
<dbReference type="SFLD" id="SFLDG01060">
    <property type="entry name" value="BATS_domain_containing"/>
    <property type="match status" value="1"/>
</dbReference>
<dbReference type="SFLD" id="SFLDG01278">
    <property type="entry name" value="biotin_synthase_like"/>
    <property type="match status" value="1"/>
</dbReference>
<dbReference type="SMART" id="SM00876">
    <property type="entry name" value="BATS"/>
    <property type="match status" value="1"/>
</dbReference>
<dbReference type="SMART" id="SM00729">
    <property type="entry name" value="Elp3"/>
    <property type="match status" value="1"/>
</dbReference>
<dbReference type="SUPFAM" id="SSF102114">
    <property type="entry name" value="Radical SAM enzymes"/>
    <property type="match status" value="1"/>
</dbReference>
<dbReference type="PROSITE" id="PS51918">
    <property type="entry name" value="RADICAL_SAM"/>
    <property type="match status" value="1"/>
</dbReference>
<evidence type="ECO:0000255" key="1">
    <source>
        <dbReference type="HAMAP-Rule" id="MF_01694"/>
    </source>
</evidence>
<evidence type="ECO:0000255" key="2">
    <source>
        <dbReference type="PROSITE-ProRule" id="PRU01266"/>
    </source>
</evidence>